<accession>Q9V498</accession>
<accession>A4V137</accession>
<accession>Q9GP64</accession>
<gene>
    <name type="primary">Cals</name>
    <name type="synonym">Cad102F</name>
    <name type="synonym">CLSTN1</name>
    <name type="ORF">CG11059</name>
</gene>
<reference key="1">
    <citation type="journal article" date="2001" name="Mol. Cell. Neurosci.">
        <title>Calsyntenin-1, a proteolytically processed postsynaptic membrane protein with a cytoplasmic calcium-binding domain.</title>
        <authorList>
            <person name="Vogt L."/>
            <person name="Schrimpf S.P."/>
            <person name="Meskenaite V."/>
            <person name="Frischknecht R."/>
            <person name="Kinter J."/>
            <person name="Leone D.P."/>
            <person name="Ziegler U."/>
            <person name="Sonderegger P."/>
        </authorList>
    </citation>
    <scope>NUCLEOTIDE SEQUENCE [MRNA]</scope>
    <source>
        <tissue>Head</tissue>
    </source>
</reference>
<reference key="2">
    <citation type="journal article" date="2000" name="Science">
        <title>The genome sequence of Drosophila melanogaster.</title>
        <authorList>
            <person name="Adams M.D."/>
            <person name="Celniker S.E."/>
            <person name="Holt R.A."/>
            <person name="Evans C.A."/>
            <person name="Gocayne J.D."/>
            <person name="Amanatides P.G."/>
            <person name="Scherer S.E."/>
            <person name="Li P.W."/>
            <person name="Hoskins R.A."/>
            <person name="Galle R.F."/>
            <person name="George R.A."/>
            <person name="Lewis S.E."/>
            <person name="Richards S."/>
            <person name="Ashburner M."/>
            <person name="Henderson S.N."/>
            <person name="Sutton G.G."/>
            <person name="Wortman J.R."/>
            <person name="Yandell M.D."/>
            <person name="Zhang Q."/>
            <person name="Chen L.X."/>
            <person name="Brandon R.C."/>
            <person name="Rogers Y.-H.C."/>
            <person name="Blazej R.G."/>
            <person name="Champe M."/>
            <person name="Pfeiffer B.D."/>
            <person name="Wan K.H."/>
            <person name="Doyle C."/>
            <person name="Baxter E.G."/>
            <person name="Helt G."/>
            <person name="Nelson C.R."/>
            <person name="Miklos G.L.G."/>
            <person name="Abril J.F."/>
            <person name="Agbayani A."/>
            <person name="An H.-J."/>
            <person name="Andrews-Pfannkoch C."/>
            <person name="Baldwin D."/>
            <person name="Ballew R.M."/>
            <person name="Basu A."/>
            <person name="Baxendale J."/>
            <person name="Bayraktaroglu L."/>
            <person name="Beasley E.M."/>
            <person name="Beeson K.Y."/>
            <person name="Benos P.V."/>
            <person name="Berman B.P."/>
            <person name="Bhandari D."/>
            <person name="Bolshakov S."/>
            <person name="Borkova D."/>
            <person name="Botchan M.R."/>
            <person name="Bouck J."/>
            <person name="Brokstein P."/>
            <person name="Brottier P."/>
            <person name="Burtis K.C."/>
            <person name="Busam D.A."/>
            <person name="Butler H."/>
            <person name="Cadieu E."/>
            <person name="Center A."/>
            <person name="Chandra I."/>
            <person name="Cherry J.M."/>
            <person name="Cawley S."/>
            <person name="Dahlke C."/>
            <person name="Davenport L.B."/>
            <person name="Davies P."/>
            <person name="de Pablos B."/>
            <person name="Delcher A."/>
            <person name="Deng Z."/>
            <person name="Mays A.D."/>
            <person name="Dew I."/>
            <person name="Dietz S.M."/>
            <person name="Dodson K."/>
            <person name="Doup L.E."/>
            <person name="Downes M."/>
            <person name="Dugan-Rocha S."/>
            <person name="Dunkov B.C."/>
            <person name="Dunn P."/>
            <person name="Durbin K.J."/>
            <person name="Evangelista C.C."/>
            <person name="Ferraz C."/>
            <person name="Ferriera S."/>
            <person name="Fleischmann W."/>
            <person name="Fosler C."/>
            <person name="Gabrielian A.E."/>
            <person name="Garg N.S."/>
            <person name="Gelbart W.M."/>
            <person name="Glasser K."/>
            <person name="Glodek A."/>
            <person name="Gong F."/>
            <person name="Gorrell J.H."/>
            <person name="Gu Z."/>
            <person name="Guan P."/>
            <person name="Harris M."/>
            <person name="Harris N.L."/>
            <person name="Harvey D.A."/>
            <person name="Heiman T.J."/>
            <person name="Hernandez J.R."/>
            <person name="Houck J."/>
            <person name="Hostin D."/>
            <person name="Houston K.A."/>
            <person name="Howland T.J."/>
            <person name="Wei M.-H."/>
            <person name="Ibegwam C."/>
            <person name="Jalali M."/>
            <person name="Kalush F."/>
            <person name="Karpen G.H."/>
            <person name="Ke Z."/>
            <person name="Kennison J.A."/>
            <person name="Ketchum K.A."/>
            <person name="Kimmel B.E."/>
            <person name="Kodira C.D."/>
            <person name="Kraft C.L."/>
            <person name="Kravitz S."/>
            <person name="Kulp D."/>
            <person name="Lai Z."/>
            <person name="Lasko P."/>
            <person name="Lei Y."/>
            <person name="Levitsky A.A."/>
            <person name="Li J.H."/>
            <person name="Li Z."/>
            <person name="Liang Y."/>
            <person name="Lin X."/>
            <person name="Liu X."/>
            <person name="Mattei B."/>
            <person name="McIntosh T.C."/>
            <person name="McLeod M.P."/>
            <person name="McPherson D."/>
            <person name="Merkulov G."/>
            <person name="Milshina N.V."/>
            <person name="Mobarry C."/>
            <person name="Morris J."/>
            <person name="Moshrefi A."/>
            <person name="Mount S.M."/>
            <person name="Moy M."/>
            <person name="Murphy B."/>
            <person name="Murphy L."/>
            <person name="Muzny D.M."/>
            <person name="Nelson D.L."/>
            <person name="Nelson D.R."/>
            <person name="Nelson K.A."/>
            <person name="Nixon K."/>
            <person name="Nusskern D.R."/>
            <person name="Pacleb J.M."/>
            <person name="Palazzolo M."/>
            <person name="Pittman G.S."/>
            <person name="Pan S."/>
            <person name="Pollard J."/>
            <person name="Puri V."/>
            <person name="Reese M.G."/>
            <person name="Reinert K."/>
            <person name="Remington K."/>
            <person name="Saunders R.D.C."/>
            <person name="Scheeler F."/>
            <person name="Shen H."/>
            <person name="Shue B.C."/>
            <person name="Siden-Kiamos I."/>
            <person name="Simpson M."/>
            <person name="Skupski M.P."/>
            <person name="Smith T.J."/>
            <person name="Spier E."/>
            <person name="Spradling A.C."/>
            <person name="Stapleton M."/>
            <person name="Strong R."/>
            <person name="Sun E."/>
            <person name="Svirskas R."/>
            <person name="Tector C."/>
            <person name="Turner R."/>
            <person name="Venter E."/>
            <person name="Wang A.H."/>
            <person name="Wang X."/>
            <person name="Wang Z.-Y."/>
            <person name="Wassarman D.A."/>
            <person name="Weinstock G.M."/>
            <person name="Weissenbach J."/>
            <person name="Williams S.M."/>
            <person name="Woodage T."/>
            <person name="Worley K.C."/>
            <person name="Wu D."/>
            <person name="Yang S."/>
            <person name="Yao Q.A."/>
            <person name="Ye J."/>
            <person name="Yeh R.-F."/>
            <person name="Zaveri J.S."/>
            <person name="Zhan M."/>
            <person name="Zhang G."/>
            <person name="Zhao Q."/>
            <person name="Zheng L."/>
            <person name="Zheng X.H."/>
            <person name="Zhong F.N."/>
            <person name="Zhong W."/>
            <person name="Zhou X."/>
            <person name="Zhu S.C."/>
            <person name="Zhu X."/>
            <person name="Smith H.O."/>
            <person name="Gibbs R.A."/>
            <person name="Myers E.W."/>
            <person name="Rubin G.M."/>
            <person name="Venter J.C."/>
        </authorList>
    </citation>
    <scope>NUCLEOTIDE SEQUENCE [LARGE SCALE GENOMIC DNA]</scope>
    <source>
        <strain>Berkeley</strain>
    </source>
</reference>
<reference key="3">
    <citation type="journal article" date="2002" name="Genome Biol.">
        <title>Annotation of the Drosophila melanogaster euchromatic genome: a systematic review.</title>
        <authorList>
            <person name="Misra S."/>
            <person name="Crosby M.A."/>
            <person name="Mungall C.J."/>
            <person name="Matthews B.B."/>
            <person name="Campbell K.S."/>
            <person name="Hradecky P."/>
            <person name="Huang Y."/>
            <person name="Kaminker J.S."/>
            <person name="Millburn G.H."/>
            <person name="Prochnik S.E."/>
            <person name="Smith C.D."/>
            <person name="Tupy J.L."/>
            <person name="Whitfield E.J."/>
            <person name="Bayraktaroglu L."/>
            <person name="Berman B.P."/>
            <person name="Bettencourt B.R."/>
            <person name="Celniker S.E."/>
            <person name="de Grey A.D.N.J."/>
            <person name="Drysdale R.A."/>
            <person name="Harris N.L."/>
            <person name="Richter J."/>
            <person name="Russo S."/>
            <person name="Schroeder A.J."/>
            <person name="Shu S.Q."/>
            <person name="Stapleton M."/>
            <person name="Yamada C."/>
            <person name="Ashburner M."/>
            <person name="Gelbart W.M."/>
            <person name="Rubin G.M."/>
            <person name="Lewis S.E."/>
        </authorList>
    </citation>
    <scope>GENOME REANNOTATION</scope>
    <source>
        <strain>Berkeley</strain>
    </source>
</reference>
<reference key="4">
    <citation type="journal article" date="2002" name="Genome Biol.">
        <title>A Drosophila full-length cDNA resource.</title>
        <authorList>
            <person name="Stapleton M."/>
            <person name="Carlson J.W."/>
            <person name="Brokstein P."/>
            <person name="Yu C."/>
            <person name="Champe M."/>
            <person name="George R.A."/>
            <person name="Guarin H."/>
            <person name="Kronmiller B."/>
            <person name="Pacleb J.M."/>
            <person name="Park S."/>
            <person name="Wan K.H."/>
            <person name="Rubin G.M."/>
            <person name="Celniker S.E."/>
        </authorList>
    </citation>
    <scope>NUCLEOTIDE SEQUENCE [LARGE SCALE MRNA]</scope>
    <source>
        <strain>Berkeley</strain>
        <tissue>Embryo</tissue>
    </source>
</reference>
<reference key="5">
    <citation type="journal article" date="2007" name="Glycobiology">
        <title>Identification of N-glycosylated proteins from the central nervous system of Drosophila melanogaster.</title>
        <authorList>
            <person name="Koles K."/>
            <person name="Lim J.-M."/>
            <person name="Aoki K."/>
            <person name="Porterfield M."/>
            <person name="Tiemeyer M."/>
            <person name="Wells L."/>
            <person name="Panin V."/>
        </authorList>
    </citation>
    <scope>GLYCOSYLATION [LARGE SCALE ANALYSIS] AT ASN-304</scope>
    <scope>IDENTIFICATION BY MASS SPECTROMETRY</scope>
    <source>
        <strain>Oregon-R</strain>
        <tissue>Head</tissue>
    </source>
</reference>
<feature type="signal peptide" evidence="3">
    <location>
        <begin position="1"/>
        <end position="26"/>
    </location>
</feature>
<feature type="chain" id="PRO_0000004029" description="Calsyntenin-1">
    <location>
        <begin position="27"/>
        <end position="978"/>
    </location>
</feature>
<feature type="topological domain" description="Extracellular" evidence="3">
    <location>
        <begin position="27"/>
        <end position="876"/>
    </location>
</feature>
<feature type="transmembrane region" description="Helical" evidence="3">
    <location>
        <begin position="877"/>
        <end position="897"/>
    </location>
</feature>
<feature type="topological domain" description="Cytoplasmic" evidence="3">
    <location>
        <begin position="898"/>
        <end position="978"/>
    </location>
</feature>
<feature type="domain" description="Cadherin 1" evidence="4">
    <location>
        <begin position="37"/>
        <end position="143"/>
    </location>
</feature>
<feature type="domain" description="Cadherin 2" evidence="4">
    <location>
        <begin position="144"/>
        <end position="249"/>
    </location>
</feature>
<feature type="region of interest" description="Disordered" evidence="5">
    <location>
        <begin position="937"/>
        <end position="958"/>
    </location>
</feature>
<feature type="compositionally biased region" description="Acidic residues" evidence="5">
    <location>
        <begin position="948"/>
        <end position="957"/>
    </location>
</feature>
<feature type="glycosylation site" description="N-linked (GlcNAc...) asparagine" evidence="3">
    <location>
        <position position="53"/>
    </location>
</feature>
<feature type="glycosylation site" description="N-linked (GlcNAc...) asparagine" evidence="6">
    <location>
        <position position="304"/>
    </location>
</feature>
<feature type="glycosylation site" description="N-linked (GlcNAc...) asparagine" evidence="3">
    <location>
        <position position="486"/>
    </location>
</feature>
<feature type="glycosylation site" description="N-linked (GlcNAc...) asparagine" evidence="3">
    <location>
        <position position="608"/>
    </location>
</feature>
<feature type="glycosylation site" description="N-linked (GlcNAc...) asparagine" evidence="3">
    <location>
        <position position="823"/>
    </location>
</feature>
<dbReference type="EMBL" id="AJ289018">
    <property type="protein sequence ID" value="CAC17749.1"/>
    <property type="molecule type" value="mRNA"/>
</dbReference>
<dbReference type="EMBL" id="AE014135">
    <property type="protein sequence ID" value="AAF59384.2"/>
    <property type="molecule type" value="Genomic_DNA"/>
</dbReference>
<dbReference type="EMBL" id="AE014135">
    <property type="protein sequence ID" value="AAN06580.1"/>
    <property type="molecule type" value="Genomic_DNA"/>
</dbReference>
<dbReference type="EMBL" id="AY121644">
    <property type="protein sequence ID" value="AAM51971.1"/>
    <property type="molecule type" value="mRNA"/>
</dbReference>
<dbReference type="RefSeq" id="NP_001284722.1">
    <property type="nucleotide sequence ID" value="NM_001297793.1"/>
</dbReference>
<dbReference type="RefSeq" id="NP_524632.1">
    <property type="nucleotide sequence ID" value="NM_079893.3"/>
</dbReference>
<dbReference type="RefSeq" id="NP_726646.1">
    <property type="nucleotide sequence ID" value="NM_166823.2"/>
</dbReference>
<dbReference type="SMR" id="Q9V498"/>
<dbReference type="FunCoup" id="Q9V498">
    <property type="interactions" value="279"/>
</dbReference>
<dbReference type="IntAct" id="Q9V498">
    <property type="interactions" value="1"/>
</dbReference>
<dbReference type="STRING" id="7227.FBpp0305853"/>
<dbReference type="GlyCosmos" id="Q9V498">
    <property type="glycosylation" value="5 sites, No reported glycans"/>
</dbReference>
<dbReference type="GlyGen" id="Q9V498">
    <property type="glycosylation" value="6 sites"/>
</dbReference>
<dbReference type="iPTMnet" id="Q9V498"/>
<dbReference type="PaxDb" id="7227-FBpp0305853"/>
<dbReference type="DNASU" id="43824"/>
<dbReference type="EnsemblMetazoa" id="FBtr0089207">
    <property type="protein sequence ID" value="FBpp0088271"/>
    <property type="gene ID" value="FBgn0039928"/>
</dbReference>
<dbReference type="EnsemblMetazoa" id="FBtr0089208">
    <property type="protein sequence ID" value="FBpp0088272"/>
    <property type="gene ID" value="FBgn0039928"/>
</dbReference>
<dbReference type="EnsemblMetazoa" id="FBtr0345193">
    <property type="protein sequence ID" value="FBpp0311392"/>
    <property type="gene ID" value="FBgn0039928"/>
</dbReference>
<dbReference type="GeneID" id="43824"/>
<dbReference type="KEGG" id="dme:Dmel_CG11059"/>
<dbReference type="UCSC" id="CG11059-RA">
    <property type="organism name" value="d. melanogaster"/>
</dbReference>
<dbReference type="AGR" id="FB:FBgn0039928"/>
<dbReference type="CTD" id="43824"/>
<dbReference type="FlyBase" id="FBgn0039928">
    <property type="gene designation" value="Cals"/>
</dbReference>
<dbReference type="VEuPathDB" id="VectorBase:FBgn0039928"/>
<dbReference type="eggNOG" id="KOG1834">
    <property type="taxonomic scope" value="Eukaryota"/>
</dbReference>
<dbReference type="HOGENOM" id="CLU_008904_0_0_1"/>
<dbReference type="InParanoid" id="Q9V498"/>
<dbReference type="OrthoDB" id="10012272at2759"/>
<dbReference type="PhylomeDB" id="Q9V498"/>
<dbReference type="SignaLink" id="Q9V498"/>
<dbReference type="BioGRID-ORCS" id="43824">
    <property type="hits" value="0 hits in 3 CRISPR screens"/>
</dbReference>
<dbReference type="GenomeRNAi" id="43824"/>
<dbReference type="PRO" id="PR:Q9V498"/>
<dbReference type="Proteomes" id="UP000000803">
    <property type="component" value="Chromosome 4"/>
</dbReference>
<dbReference type="Bgee" id="FBgn0039928">
    <property type="expression patterns" value="Expressed in gamma Kenyon cell (Drosophila) in insect head and 293 other cell types or tissues"/>
</dbReference>
<dbReference type="ExpressionAtlas" id="Q9V498">
    <property type="expression patterns" value="baseline and differential"/>
</dbReference>
<dbReference type="GO" id="GO:0009986">
    <property type="term" value="C:cell surface"/>
    <property type="evidence" value="ECO:0000318"/>
    <property type="project" value="GO_Central"/>
</dbReference>
<dbReference type="GO" id="GO:0005576">
    <property type="term" value="C:extracellular region"/>
    <property type="evidence" value="ECO:0000250"/>
    <property type="project" value="UniProtKB"/>
</dbReference>
<dbReference type="GO" id="GO:0005886">
    <property type="term" value="C:plasma membrane"/>
    <property type="evidence" value="ECO:0000250"/>
    <property type="project" value="FlyBase"/>
</dbReference>
<dbReference type="GO" id="GO:0045211">
    <property type="term" value="C:postsynaptic membrane"/>
    <property type="evidence" value="ECO:0000250"/>
    <property type="project" value="UniProtKB"/>
</dbReference>
<dbReference type="GO" id="GO:0005509">
    <property type="term" value="F:calcium ion binding"/>
    <property type="evidence" value="ECO:0000255"/>
    <property type="project" value="FlyBase"/>
</dbReference>
<dbReference type="GO" id="GO:0016339">
    <property type="term" value="P:calcium-dependent cell-cell adhesion via plasma membrane cell adhesion molecules"/>
    <property type="evidence" value="ECO:0000250"/>
    <property type="project" value="FlyBase"/>
</dbReference>
<dbReference type="GO" id="GO:0044331">
    <property type="term" value="P:cell-cell adhesion mediated by cadherin"/>
    <property type="evidence" value="ECO:0000255"/>
    <property type="project" value="FlyBase"/>
</dbReference>
<dbReference type="GO" id="GO:0007156">
    <property type="term" value="P:homophilic cell adhesion via plasma membrane adhesion molecules"/>
    <property type="evidence" value="ECO:0007669"/>
    <property type="project" value="InterPro"/>
</dbReference>
<dbReference type="GO" id="GO:0051965">
    <property type="term" value="P:positive regulation of synapse assembly"/>
    <property type="evidence" value="ECO:0000318"/>
    <property type="project" value="GO_Central"/>
</dbReference>
<dbReference type="GO" id="GO:0050806">
    <property type="term" value="P:positive regulation of synaptic transmission"/>
    <property type="evidence" value="ECO:0000318"/>
    <property type="project" value="GO_Central"/>
</dbReference>
<dbReference type="CDD" id="cd11304">
    <property type="entry name" value="Cadherin_repeat"/>
    <property type="match status" value="1"/>
</dbReference>
<dbReference type="FunFam" id="2.60.40.60:FF:000025">
    <property type="entry name" value="Calsyntenin 1"/>
    <property type="match status" value="1"/>
</dbReference>
<dbReference type="FunFam" id="2.60.120.200:FF:000249">
    <property type="entry name" value="Calsyntenin-1, isoform C"/>
    <property type="match status" value="1"/>
</dbReference>
<dbReference type="FunFam" id="2.60.40.60:FF:000285">
    <property type="entry name" value="Calsyntenin-1, isoform C"/>
    <property type="match status" value="1"/>
</dbReference>
<dbReference type="Gene3D" id="2.60.120.200">
    <property type="match status" value="1"/>
</dbReference>
<dbReference type="Gene3D" id="2.60.40.60">
    <property type="entry name" value="Cadherins"/>
    <property type="match status" value="2"/>
</dbReference>
<dbReference type="InterPro" id="IPR002126">
    <property type="entry name" value="Cadherin-like_dom"/>
</dbReference>
<dbReference type="InterPro" id="IPR015919">
    <property type="entry name" value="Cadherin-like_sf"/>
</dbReference>
<dbReference type="InterPro" id="IPR045588">
    <property type="entry name" value="CLSTN_C"/>
</dbReference>
<dbReference type="InterPro" id="IPR013320">
    <property type="entry name" value="ConA-like_dom_sf"/>
</dbReference>
<dbReference type="PANTHER" id="PTHR14139">
    <property type="entry name" value="CALSYNTENIN"/>
    <property type="match status" value="1"/>
</dbReference>
<dbReference type="PANTHER" id="PTHR14139:SF2">
    <property type="entry name" value="CALSYNTENIN-1"/>
    <property type="match status" value="1"/>
</dbReference>
<dbReference type="Pfam" id="PF19699">
    <property type="entry name" value="CLSTN_C"/>
    <property type="match status" value="1"/>
</dbReference>
<dbReference type="PRINTS" id="PR00205">
    <property type="entry name" value="CADHERIN"/>
</dbReference>
<dbReference type="SMART" id="SM00112">
    <property type="entry name" value="CA"/>
    <property type="match status" value="2"/>
</dbReference>
<dbReference type="SUPFAM" id="SSF49313">
    <property type="entry name" value="Cadherin-like"/>
    <property type="match status" value="2"/>
</dbReference>
<dbReference type="SUPFAM" id="SSF49899">
    <property type="entry name" value="Concanavalin A-like lectins/glucanases"/>
    <property type="match status" value="1"/>
</dbReference>
<dbReference type="PROSITE" id="PS50268">
    <property type="entry name" value="CADHERIN_2"/>
    <property type="match status" value="2"/>
</dbReference>
<keyword id="KW-0106">Calcium</keyword>
<keyword id="KW-0130">Cell adhesion</keyword>
<keyword id="KW-1003">Cell membrane</keyword>
<keyword id="KW-0325">Glycoprotein</keyword>
<keyword id="KW-0472">Membrane</keyword>
<keyword id="KW-0628">Postsynaptic cell membrane</keyword>
<keyword id="KW-1185">Reference proteome</keyword>
<keyword id="KW-0677">Repeat</keyword>
<keyword id="KW-0732">Signal</keyword>
<keyword id="KW-0770">Synapse</keyword>
<keyword id="KW-0812">Transmembrane</keyword>
<keyword id="KW-1133">Transmembrane helix</keyword>
<comment type="function">
    <text evidence="1 2">Postsynaptic adhesion molecule that binds to presynaptic neurexins to mediate both excitatory and inhibitory synapse formation (By similarity). Promotes synapse development by acting as a cell adhesion molecule at the postsynaptic membrane, which associates with neurexin-alpha at the presynaptic membrane (By similarity).</text>
</comment>
<comment type="subcellular location">
    <subcellularLocation>
        <location evidence="2">Postsynaptic cell membrane</location>
        <topology evidence="2">Single-pass type I membrane protein</topology>
    </subcellularLocation>
</comment>
<comment type="domain">
    <text evidence="2">The cytoplasmic domain binds synaptic Ca(2+).</text>
</comment>
<comment type="similarity">
    <text evidence="7">Belongs to the calsyntenin family.</text>
</comment>
<proteinExistence type="evidence at protein level"/>
<evidence type="ECO:0000250" key="1">
    <source>
        <dbReference type="UniProtKB" id="Q99JH7"/>
    </source>
</evidence>
<evidence type="ECO:0000250" key="2">
    <source>
        <dbReference type="UniProtKB" id="Q9EPL2"/>
    </source>
</evidence>
<evidence type="ECO:0000255" key="3"/>
<evidence type="ECO:0000255" key="4">
    <source>
        <dbReference type="PROSITE-ProRule" id="PRU00043"/>
    </source>
</evidence>
<evidence type="ECO:0000256" key="5">
    <source>
        <dbReference type="SAM" id="MobiDB-lite"/>
    </source>
</evidence>
<evidence type="ECO:0000269" key="6">
    <source>
    </source>
</evidence>
<evidence type="ECO:0000305" key="7"/>
<organism>
    <name type="scientific">Drosophila melanogaster</name>
    <name type="common">Fruit fly</name>
    <dbReference type="NCBI Taxonomy" id="7227"/>
    <lineage>
        <taxon>Eukaryota</taxon>
        <taxon>Metazoa</taxon>
        <taxon>Ecdysozoa</taxon>
        <taxon>Arthropoda</taxon>
        <taxon>Hexapoda</taxon>
        <taxon>Insecta</taxon>
        <taxon>Pterygota</taxon>
        <taxon>Neoptera</taxon>
        <taxon>Endopterygota</taxon>
        <taxon>Diptera</taxon>
        <taxon>Brachycera</taxon>
        <taxon>Muscomorpha</taxon>
        <taxon>Ephydroidea</taxon>
        <taxon>Drosophilidae</taxon>
        <taxon>Drosophila</taxon>
        <taxon>Sophophora</taxon>
    </lineage>
</organism>
<protein>
    <recommendedName>
        <fullName>Calsyntenin-1</fullName>
    </recommendedName>
    <alternativeName>
        <fullName>Cadherin-102F</fullName>
    </alternativeName>
</protein>
<sequence length="978" mass="110493">MTFHKTFGYGCIVLICFELLFAGVETSSENDDEYLTQKEIILEKSYHGLIRENETLVEITPLIKVNEEKICNFHILKKPYHEIPFKIELVNNLGILKARRTLNCENRKSYHFEICAIYCDGTPSNTANVHITVIDVNEYAPTFLEPSYVIEVDEGRLYNEILRVEASDKDCTPLFGDVCKYEILNNDEPFSIDNEGSIKNTEPLSHKASHNHILSVVAYDCAMKESAPIMVSIKVRRVCETKFVGMPERIDYTSGSTESLQLFPNARLDLCDISCKNEEDLRIHSSIALKTKHISFGCDRDISNCTSGQKVKDLLPHGAEWTKELSYDEGLEPIFHFDGSTGVVVPATVIDHYDFSSQPFSILTLFRHNSQVEINKHVKEHIVCSADDHKMNRHHMALFVRNCRLIFLLRKNFNEGDLNIFSPAEWRWKIPEVCDNEWHHYVLNVEDSSKVDLFIDGVRFENSIENRHSNPEVIDDWPLHAAHGVNTSLAIGACYQSLENRLKHGFNGDISEVKVSLNSVLTAEDIKCGTTCAEHLLAPKPLQSNNEKSYSDNSQIKENIEMNEIYISAKNKHDIEQFMRKVQYINTKQKPTVGRRNIEVLTTLNCKNESSLRLPPIETYIMVNEPIAPLGIDIDVVSASLETSDLTPPSYSPKIAISGTSNKLVSYQEIKLGVHILEKTCIDSVSKNNGKLEEKNHIDSCSVVVFPSLNPDHEDIKIDGDESLSSSMDIKTNINKDGVEMIGKDTISNYINVLRSLVYSNKKPAYYLNRVFKLSCAQQSSQYKSGEYTLTLTVLHPKQTLFKSTNVLPSSLSKVNFIGNTDNETSFHRNSGSVNGNDNNQPTESKVYSYSLLHTNNVQEPKSHIHSFIHKAEGSHVTMLIILVSVFLAVLLCGVSIARLKNNQKYIEHHQPCPKISDDGLIWDDSALTITINPMQADVTSDASSESENSESEDEEALKDGFTHINQLEWDNSNIFQQ</sequence>
<name>CSTN1_DROME</name>